<evidence type="ECO:0000255" key="1">
    <source>
        <dbReference type="HAMAP-Rule" id="MF_00036"/>
    </source>
</evidence>
<comment type="function">
    <text evidence="1">Catalyzes the attachment of alanine to tRNA(Ala) in a two-step reaction: alanine is first activated by ATP to form Ala-AMP and then transferred to the acceptor end of tRNA(Ala). Also edits incorrectly charged Ser-tRNA(Ala) and Gly-tRNA(Ala) via its editing domain.</text>
</comment>
<comment type="catalytic activity">
    <reaction evidence="1">
        <text>tRNA(Ala) + L-alanine + ATP = L-alanyl-tRNA(Ala) + AMP + diphosphate</text>
        <dbReference type="Rhea" id="RHEA:12540"/>
        <dbReference type="Rhea" id="RHEA-COMP:9657"/>
        <dbReference type="Rhea" id="RHEA-COMP:9923"/>
        <dbReference type="ChEBI" id="CHEBI:30616"/>
        <dbReference type="ChEBI" id="CHEBI:33019"/>
        <dbReference type="ChEBI" id="CHEBI:57972"/>
        <dbReference type="ChEBI" id="CHEBI:78442"/>
        <dbReference type="ChEBI" id="CHEBI:78497"/>
        <dbReference type="ChEBI" id="CHEBI:456215"/>
        <dbReference type="EC" id="6.1.1.7"/>
    </reaction>
</comment>
<comment type="cofactor">
    <cofactor evidence="1">
        <name>Zn(2+)</name>
        <dbReference type="ChEBI" id="CHEBI:29105"/>
    </cofactor>
    <text evidence="1">Binds 1 zinc ion per subunit.</text>
</comment>
<comment type="subcellular location">
    <subcellularLocation>
        <location evidence="1">Cytoplasm</location>
    </subcellularLocation>
</comment>
<comment type="domain">
    <text evidence="1">Consists of three domains; the N-terminal catalytic domain, the editing domain and the C-terminal C-Ala domain. The editing domain removes incorrectly charged amino acids, while the C-Ala domain, along with tRNA(Ala), serves as a bridge to cooperatively bring together the editing and aminoacylation centers thus stimulating deacylation of misacylated tRNAs.</text>
</comment>
<comment type="similarity">
    <text evidence="1">Belongs to the class-II aminoacyl-tRNA synthetase family.</text>
</comment>
<organism>
    <name type="scientific">Xanthomonas campestris pv. campestris (strain 8004)</name>
    <dbReference type="NCBI Taxonomy" id="314565"/>
    <lineage>
        <taxon>Bacteria</taxon>
        <taxon>Pseudomonadati</taxon>
        <taxon>Pseudomonadota</taxon>
        <taxon>Gammaproteobacteria</taxon>
        <taxon>Lysobacterales</taxon>
        <taxon>Lysobacteraceae</taxon>
        <taxon>Xanthomonas</taxon>
    </lineage>
</organism>
<keyword id="KW-0030">Aminoacyl-tRNA synthetase</keyword>
<keyword id="KW-0067">ATP-binding</keyword>
<keyword id="KW-0963">Cytoplasm</keyword>
<keyword id="KW-0436">Ligase</keyword>
<keyword id="KW-0479">Metal-binding</keyword>
<keyword id="KW-0547">Nucleotide-binding</keyword>
<keyword id="KW-0648">Protein biosynthesis</keyword>
<keyword id="KW-0694">RNA-binding</keyword>
<keyword id="KW-0820">tRNA-binding</keyword>
<keyword id="KW-0862">Zinc</keyword>
<gene>
    <name evidence="1" type="primary">alaS</name>
    <name type="ordered locus">XC_2507</name>
</gene>
<accession>Q4UTR6</accession>
<reference key="1">
    <citation type="journal article" date="2005" name="Genome Res.">
        <title>Comparative and functional genomic analyses of the pathogenicity of phytopathogen Xanthomonas campestris pv. campestris.</title>
        <authorList>
            <person name="Qian W."/>
            <person name="Jia Y."/>
            <person name="Ren S.-X."/>
            <person name="He Y.-Q."/>
            <person name="Feng J.-X."/>
            <person name="Lu L.-F."/>
            <person name="Sun Q."/>
            <person name="Ying G."/>
            <person name="Tang D.-J."/>
            <person name="Tang H."/>
            <person name="Wu W."/>
            <person name="Hao P."/>
            <person name="Wang L."/>
            <person name="Jiang B.-L."/>
            <person name="Zeng S."/>
            <person name="Gu W.-Y."/>
            <person name="Lu G."/>
            <person name="Rong L."/>
            <person name="Tian Y."/>
            <person name="Yao Z."/>
            <person name="Fu G."/>
            <person name="Chen B."/>
            <person name="Fang R."/>
            <person name="Qiang B."/>
            <person name="Chen Z."/>
            <person name="Zhao G.-P."/>
            <person name="Tang J.-L."/>
            <person name="He C."/>
        </authorList>
    </citation>
    <scope>NUCLEOTIDE SEQUENCE [LARGE SCALE GENOMIC DNA]</scope>
    <source>
        <strain>8004</strain>
    </source>
</reference>
<dbReference type="EC" id="6.1.1.7" evidence="1"/>
<dbReference type="EMBL" id="CP000050">
    <property type="protein sequence ID" value="AAY49557.1"/>
    <property type="molecule type" value="Genomic_DNA"/>
</dbReference>
<dbReference type="RefSeq" id="WP_011269876.1">
    <property type="nucleotide sequence ID" value="NZ_CP155948.1"/>
</dbReference>
<dbReference type="SMR" id="Q4UTR6"/>
<dbReference type="KEGG" id="xcb:XC_2507"/>
<dbReference type="HOGENOM" id="CLU_004485_1_1_6"/>
<dbReference type="Proteomes" id="UP000000420">
    <property type="component" value="Chromosome"/>
</dbReference>
<dbReference type="GO" id="GO:0005829">
    <property type="term" value="C:cytosol"/>
    <property type="evidence" value="ECO:0007669"/>
    <property type="project" value="TreeGrafter"/>
</dbReference>
<dbReference type="GO" id="GO:0004813">
    <property type="term" value="F:alanine-tRNA ligase activity"/>
    <property type="evidence" value="ECO:0007669"/>
    <property type="project" value="UniProtKB-UniRule"/>
</dbReference>
<dbReference type="GO" id="GO:0002161">
    <property type="term" value="F:aminoacyl-tRNA deacylase activity"/>
    <property type="evidence" value="ECO:0007669"/>
    <property type="project" value="TreeGrafter"/>
</dbReference>
<dbReference type="GO" id="GO:0005524">
    <property type="term" value="F:ATP binding"/>
    <property type="evidence" value="ECO:0007669"/>
    <property type="project" value="UniProtKB-UniRule"/>
</dbReference>
<dbReference type="GO" id="GO:0000049">
    <property type="term" value="F:tRNA binding"/>
    <property type="evidence" value="ECO:0007669"/>
    <property type="project" value="UniProtKB-KW"/>
</dbReference>
<dbReference type="GO" id="GO:0008270">
    <property type="term" value="F:zinc ion binding"/>
    <property type="evidence" value="ECO:0007669"/>
    <property type="project" value="UniProtKB-UniRule"/>
</dbReference>
<dbReference type="GO" id="GO:0006419">
    <property type="term" value="P:alanyl-tRNA aminoacylation"/>
    <property type="evidence" value="ECO:0007669"/>
    <property type="project" value="UniProtKB-UniRule"/>
</dbReference>
<dbReference type="GO" id="GO:0045892">
    <property type="term" value="P:negative regulation of DNA-templated transcription"/>
    <property type="evidence" value="ECO:0007669"/>
    <property type="project" value="TreeGrafter"/>
</dbReference>
<dbReference type="CDD" id="cd00673">
    <property type="entry name" value="AlaRS_core"/>
    <property type="match status" value="1"/>
</dbReference>
<dbReference type="FunFam" id="2.40.30.130:FF:000001">
    <property type="entry name" value="Alanine--tRNA ligase"/>
    <property type="match status" value="1"/>
</dbReference>
<dbReference type="FunFam" id="3.10.310.40:FF:000001">
    <property type="entry name" value="Alanine--tRNA ligase"/>
    <property type="match status" value="1"/>
</dbReference>
<dbReference type="FunFam" id="3.30.54.20:FF:000001">
    <property type="entry name" value="Alanine--tRNA ligase"/>
    <property type="match status" value="1"/>
</dbReference>
<dbReference type="FunFam" id="3.30.930.10:FF:000004">
    <property type="entry name" value="Alanine--tRNA ligase"/>
    <property type="match status" value="1"/>
</dbReference>
<dbReference type="FunFam" id="3.30.980.10:FF:000004">
    <property type="entry name" value="Alanine--tRNA ligase, cytoplasmic"/>
    <property type="match status" value="1"/>
</dbReference>
<dbReference type="Gene3D" id="2.40.30.130">
    <property type="match status" value="1"/>
</dbReference>
<dbReference type="Gene3D" id="3.10.310.40">
    <property type="match status" value="1"/>
</dbReference>
<dbReference type="Gene3D" id="3.30.54.20">
    <property type="match status" value="1"/>
</dbReference>
<dbReference type="Gene3D" id="6.10.250.550">
    <property type="match status" value="1"/>
</dbReference>
<dbReference type="Gene3D" id="3.30.930.10">
    <property type="entry name" value="Bira Bifunctional Protein, Domain 2"/>
    <property type="match status" value="1"/>
</dbReference>
<dbReference type="Gene3D" id="3.30.980.10">
    <property type="entry name" value="Threonyl-trna Synthetase, Chain A, domain 2"/>
    <property type="match status" value="1"/>
</dbReference>
<dbReference type="HAMAP" id="MF_00036_B">
    <property type="entry name" value="Ala_tRNA_synth_B"/>
    <property type="match status" value="1"/>
</dbReference>
<dbReference type="InterPro" id="IPR045864">
    <property type="entry name" value="aa-tRNA-synth_II/BPL/LPL"/>
</dbReference>
<dbReference type="InterPro" id="IPR002318">
    <property type="entry name" value="Ala-tRNA-lgiase_IIc"/>
</dbReference>
<dbReference type="InterPro" id="IPR018162">
    <property type="entry name" value="Ala-tRNA-ligase_IIc_anticod-bd"/>
</dbReference>
<dbReference type="InterPro" id="IPR018165">
    <property type="entry name" value="Ala-tRNA-synth_IIc_core"/>
</dbReference>
<dbReference type="InterPro" id="IPR018164">
    <property type="entry name" value="Ala-tRNA-synth_IIc_N"/>
</dbReference>
<dbReference type="InterPro" id="IPR050058">
    <property type="entry name" value="Ala-tRNA_ligase"/>
</dbReference>
<dbReference type="InterPro" id="IPR023033">
    <property type="entry name" value="Ala_tRNA_ligase_euk/bac"/>
</dbReference>
<dbReference type="InterPro" id="IPR003156">
    <property type="entry name" value="DHHA1_dom"/>
</dbReference>
<dbReference type="InterPro" id="IPR018163">
    <property type="entry name" value="Thr/Ala-tRNA-synth_IIc_edit"/>
</dbReference>
<dbReference type="InterPro" id="IPR009000">
    <property type="entry name" value="Transl_B-barrel_sf"/>
</dbReference>
<dbReference type="InterPro" id="IPR012947">
    <property type="entry name" value="tRNA_SAD"/>
</dbReference>
<dbReference type="NCBIfam" id="TIGR00344">
    <property type="entry name" value="alaS"/>
    <property type="match status" value="1"/>
</dbReference>
<dbReference type="PANTHER" id="PTHR11777:SF9">
    <property type="entry name" value="ALANINE--TRNA LIGASE, CYTOPLASMIC"/>
    <property type="match status" value="1"/>
</dbReference>
<dbReference type="PANTHER" id="PTHR11777">
    <property type="entry name" value="ALANYL-TRNA SYNTHETASE"/>
    <property type="match status" value="1"/>
</dbReference>
<dbReference type="Pfam" id="PF02272">
    <property type="entry name" value="DHHA1"/>
    <property type="match status" value="1"/>
</dbReference>
<dbReference type="Pfam" id="PF01411">
    <property type="entry name" value="tRNA-synt_2c"/>
    <property type="match status" value="1"/>
</dbReference>
<dbReference type="Pfam" id="PF07973">
    <property type="entry name" value="tRNA_SAD"/>
    <property type="match status" value="1"/>
</dbReference>
<dbReference type="PRINTS" id="PR00980">
    <property type="entry name" value="TRNASYNTHALA"/>
</dbReference>
<dbReference type="SMART" id="SM00863">
    <property type="entry name" value="tRNA_SAD"/>
    <property type="match status" value="1"/>
</dbReference>
<dbReference type="SUPFAM" id="SSF55681">
    <property type="entry name" value="Class II aaRS and biotin synthetases"/>
    <property type="match status" value="1"/>
</dbReference>
<dbReference type="SUPFAM" id="SSF101353">
    <property type="entry name" value="Putative anticodon-binding domain of alanyl-tRNA synthetase (AlaRS)"/>
    <property type="match status" value="1"/>
</dbReference>
<dbReference type="SUPFAM" id="SSF55186">
    <property type="entry name" value="ThrRS/AlaRS common domain"/>
    <property type="match status" value="1"/>
</dbReference>
<dbReference type="SUPFAM" id="SSF50447">
    <property type="entry name" value="Translation proteins"/>
    <property type="match status" value="1"/>
</dbReference>
<dbReference type="PROSITE" id="PS50860">
    <property type="entry name" value="AA_TRNA_LIGASE_II_ALA"/>
    <property type="match status" value="1"/>
</dbReference>
<feature type="chain" id="PRO_0000075252" description="Alanine--tRNA ligase">
    <location>
        <begin position="1"/>
        <end position="882"/>
    </location>
</feature>
<feature type="binding site" evidence="1">
    <location>
        <position position="570"/>
    </location>
    <ligand>
        <name>Zn(2+)</name>
        <dbReference type="ChEBI" id="CHEBI:29105"/>
    </ligand>
</feature>
<feature type="binding site" evidence="1">
    <location>
        <position position="574"/>
    </location>
    <ligand>
        <name>Zn(2+)</name>
        <dbReference type="ChEBI" id="CHEBI:29105"/>
    </ligand>
</feature>
<feature type="binding site" evidence="1">
    <location>
        <position position="672"/>
    </location>
    <ligand>
        <name>Zn(2+)</name>
        <dbReference type="ChEBI" id="CHEBI:29105"/>
    </ligand>
</feature>
<feature type="binding site" evidence="1">
    <location>
        <position position="676"/>
    </location>
    <ligand>
        <name>Zn(2+)</name>
        <dbReference type="ChEBI" id="CHEBI:29105"/>
    </ligand>
</feature>
<sequence>MNAPAKFSTSQIRSDFLAFFEGKGHTIVPSAPLVPGNDPTLLFTNSGMVQFKDVFLGAEKRSYVRAADVQRCLRAGGKHNDLDSVGYTARHHTFFEMLGNWSFGDYFKKDAIAWAWELLTQVWKLPADRLLVTVYHTDEEAFELWRDMIGIPESRIVRIGDNKGAPYASDNFWQMADTGPCGPCTEIFFDHGDHIAGGPPGSPDEDGDRFIEIWNLVFMQFDRQPDGTLVPLPAPCVDTGMGLERLAAILQHVHTNYEIDVFQALIGKASALTGIADLENKSLRVIADHIRACSFLIVDGVLPSNEGRGYVLRRIIRRALRHGWMLGVRQLFFSKMVPTLVELMGEAYPELVVAQETVARALLAEEERFAETLDAGMKIFDDVASRSQEIIPGADAFRLYDTYGFPVDLTADIARERGMRVDMEGFEFAMERQRETARAAGKFGGGVALPADLVATMAPTVFLGYEAQDADALKVVALLKQGRPVDRAEAGDEVIVFTDRTPFYAESGGQVGDSGQLSGTDVSIEVADTQKFAGQFHGHVGRIAEGALKLGDVLSGGIDVQRRGKTILNHSATHLLHAALREVLGTHVQQKGSLVAPDRLRFDFSHFQPITAEELAVIERKVNAEVRTNHSVEVHNMAMQEALDFGAMALFGEKYGERVRVLKMGGYSTELCGGTHVSRTGDIGLFKITSEGGVSSGVRRIEAVTGQGALDYVAEEERRLGEAANLLGGNSTEIVDKVRALTDRQKRLERELESLKAKLASGATADLGASAVDVAGVKVIAVRLEGFDAKALREAMDRLKQQLGDSVIVLAGAAGGKVALVAGVNGGPTGKVKAGELLGHIASQIGGKGGGRPDLAQGGGEDGPALATALQGVPSWVKQHLG</sequence>
<name>SYA_XANC8</name>
<proteinExistence type="inferred from homology"/>
<protein>
    <recommendedName>
        <fullName evidence="1">Alanine--tRNA ligase</fullName>
        <ecNumber evidence="1">6.1.1.7</ecNumber>
    </recommendedName>
    <alternativeName>
        <fullName evidence="1">Alanyl-tRNA synthetase</fullName>
        <shortName evidence="1">AlaRS</shortName>
    </alternativeName>
</protein>